<evidence type="ECO:0000255" key="1">
    <source>
        <dbReference type="HAMAP-Rule" id="MF_01660"/>
    </source>
</evidence>
<organism>
    <name type="scientific">Yersinia pestis (strain Pestoides F)</name>
    <dbReference type="NCBI Taxonomy" id="386656"/>
    <lineage>
        <taxon>Bacteria</taxon>
        <taxon>Pseudomonadati</taxon>
        <taxon>Pseudomonadota</taxon>
        <taxon>Gammaproteobacteria</taxon>
        <taxon>Enterobacterales</taxon>
        <taxon>Yersiniaceae</taxon>
        <taxon>Yersinia</taxon>
    </lineage>
</organism>
<feature type="chain" id="PRO_0000341931" description="2-succinyl-6-hydroxy-2,4-cyclohexadiene-1-carboxylate synthase">
    <location>
        <begin position="1"/>
        <end position="272"/>
    </location>
</feature>
<sequence>MTTLACRKLAPHPESPRHQHAGPWLVWLHGLLGSGQDWLPVAQLCGDYPSLLIDLPGHGQSVSLSADGFADISRQLSQTLQANGIREYWLAGYSLGGRIAIYHACYGRHHGLQGLLVEGGNLGLENAELRQARLQQDRQWAQRFRQEPLPQVLDDWYQQAVFADLDPQQREQLVLLRADNHGPAVAEMLEATSLGHQPWLLPALQRLNVPYTYLCGDRDHKFLQLAQQYRLPLHTLARAGHNAHRANPGAFAAQVLAFLSQSSCLPPSSLSR</sequence>
<protein>
    <recommendedName>
        <fullName evidence="1">2-succinyl-6-hydroxy-2,4-cyclohexadiene-1-carboxylate synthase</fullName>
        <shortName evidence="1">SHCHC synthase</shortName>
        <ecNumber evidence="1">4.2.99.20</ecNumber>
    </recommendedName>
</protein>
<keyword id="KW-0456">Lyase</keyword>
<keyword id="KW-0474">Menaquinone biosynthesis</keyword>
<reference key="1">
    <citation type="submission" date="2007-02" db="EMBL/GenBank/DDBJ databases">
        <title>Complete sequence of chromosome of Yersinia pestis Pestoides F.</title>
        <authorList>
            <consortium name="US DOE Joint Genome Institute"/>
            <person name="Copeland A."/>
            <person name="Lucas S."/>
            <person name="Lapidus A."/>
            <person name="Barry K."/>
            <person name="Detter J.C."/>
            <person name="Glavina del Rio T."/>
            <person name="Hammon N."/>
            <person name="Israni S."/>
            <person name="Dalin E."/>
            <person name="Tice H."/>
            <person name="Pitluck S."/>
            <person name="Di Bartolo G."/>
            <person name="Chain P."/>
            <person name="Malfatti S."/>
            <person name="Shin M."/>
            <person name="Vergez L."/>
            <person name="Schmutz J."/>
            <person name="Larimer F."/>
            <person name="Land M."/>
            <person name="Hauser L."/>
            <person name="Worsham P."/>
            <person name="Chu M."/>
            <person name="Bearden S."/>
            <person name="Garcia E."/>
            <person name="Richardson P."/>
        </authorList>
    </citation>
    <scope>NUCLEOTIDE SEQUENCE [LARGE SCALE GENOMIC DNA]</scope>
    <source>
        <strain>Pestoides F</strain>
    </source>
</reference>
<dbReference type="EC" id="4.2.99.20" evidence="1"/>
<dbReference type="EMBL" id="CP000668">
    <property type="protein sequence ID" value="ABP40319.1"/>
    <property type="molecule type" value="Genomic_DNA"/>
</dbReference>
<dbReference type="RefSeq" id="WP_002210246.1">
    <property type="nucleotide sequence ID" value="NZ_CP009715.1"/>
</dbReference>
<dbReference type="SMR" id="A4TM07"/>
<dbReference type="ESTHER" id="yerpe-YPO2526">
    <property type="family name" value="MenH_SHCHC"/>
</dbReference>
<dbReference type="GeneID" id="57976161"/>
<dbReference type="KEGG" id="ypp:YPDSF_1936"/>
<dbReference type="PATRIC" id="fig|386656.14.peg.3397"/>
<dbReference type="UniPathway" id="UPA00079"/>
<dbReference type="UniPathway" id="UPA01057">
    <property type="reaction ID" value="UER00900"/>
</dbReference>
<dbReference type="GO" id="GO:0070205">
    <property type="term" value="F:2-succinyl-6-hydroxy-2,4-cyclohexadiene-1-carboxylate synthase activity"/>
    <property type="evidence" value="ECO:0007669"/>
    <property type="project" value="UniProtKB-UniRule"/>
</dbReference>
<dbReference type="GO" id="GO:0009234">
    <property type="term" value="P:menaquinone biosynthetic process"/>
    <property type="evidence" value="ECO:0007669"/>
    <property type="project" value="UniProtKB-UniRule"/>
</dbReference>
<dbReference type="Gene3D" id="3.40.50.1820">
    <property type="entry name" value="alpha/beta hydrolase"/>
    <property type="match status" value="1"/>
</dbReference>
<dbReference type="HAMAP" id="MF_01660">
    <property type="entry name" value="MenH"/>
    <property type="match status" value="1"/>
</dbReference>
<dbReference type="InterPro" id="IPR000073">
    <property type="entry name" value="AB_hydrolase_1"/>
</dbReference>
<dbReference type="InterPro" id="IPR029058">
    <property type="entry name" value="AB_hydrolase_fold"/>
</dbReference>
<dbReference type="InterPro" id="IPR022485">
    <property type="entry name" value="SHCHC_synthase_MenH"/>
</dbReference>
<dbReference type="NCBIfam" id="TIGR03695">
    <property type="entry name" value="menH_SHCHC"/>
    <property type="match status" value="1"/>
</dbReference>
<dbReference type="NCBIfam" id="NF008340">
    <property type="entry name" value="PRK11126.1"/>
    <property type="match status" value="1"/>
</dbReference>
<dbReference type="PANTHER" id="PTHR42916">
    <property type="entry name" value="2-SUCCINYL-5-ENOLPYRUVYL-6-HYDROXY-3-CYCLOHEXENE-1-CARBOXYLATE SYNTHASE"/>
    <property type="match status" value="1"/>
</dbReference>
<dbReference type="PANTHER" id="PTHR42916:SF1">
    <property type="entry name" value="PROTEIN PHYLLO, CHLOROPLASTIC"/>
    <property type="match status" value="1"/>
</dbReference>
<dbReference type="Pfam" id="PF12697">
    <property type="entry name" value="Abhydrolase_6"/>
    <property type="match status" value="1"/>
</dbReference>
<dbReference type="SUPFAM" id="SSF53474">
    <property type="entry name" value="alpha/beta-Hydrolases"/>
    <property type="match status" value="1"/>
</dbReference>
<name>MENH_YERPP</name>
<comment type="function">
    <text evidence="1">Catalyzes a proton abstraction reaction that results in 2,5-elimination of pyruvate from 2-succinyl-5-enolpyruvyl-6-hydroxy-3-cyclohexene-1-carboxylate (SEPHCHC) and the formation of 2-succinyl-6-hydroxy-2,4-cyclohexadiene-1-carboxylate (SHCHC).</text>
</comment>
<comment type="catalytic activity">
    <reaction evidence="1">
        <text>5-enolpyruvoyl-6-hydroxy-2-succinyl-cyclohex-3-ene-1-carboxylate = (1R,6R)-6-hydroxy-2-succinyl-cyclohexa-2,4-diene-1-carboxylate + pyruvate</text>
        <dbReference type="Rhea" id="RHEA:25597"/>
        <dbReference type="ChEBI" id="CHEBI:15361"/>
        <dbReference type="ChEBI" id="CHEBI:58689"/>
        <dbReference type="ChEBI" id="CHEBI:58818"/>
        <dbReference type="EC" id="4.2.99.20"/>
    </reaction>
</comment>
<comment type="pathway">
    <text evidence="1">Quinol/quinone metabolism; 1,4-dihydroxy-2-naphthoate biosynthesis; 1,4-dihydroxy-2-naphthoate from chorismate: step 3/7.</text>
</comment>
<comment type="pathway">
    <text evidence="1">Quinol/quinone metabolism; menaquinone biosynthesis.</text>
</comment>
<comment type="subunit">
    <text evidence="1">Monomer.</text>
</comment>
<comment type="similarity">
    <text evidence="1">Belongs to the AB hydrolase superfamily. MenH family.</text>
</comment>
<proteinExistence type="inferred from homology"/>
<gene>
    <name evidence="1" type="primary">menH</name>
    <name type="ordered locus">YPDSF_1936</name>
</gene>
<accession>A4TM07</accession>